<organism>
    <name type="scientific">Salmonella enteritidis PT4 (strain P125109)</name>
    <dbReference type="NCBI Taxonomy" id="550537"/>
    <lineage>
        <taxon>Bacteria</taxon>
        <taxon>Pseudomonadati</taxon>
        <taxon>Pseudomonadota</taxon>
        <taxon>Gammaproteobacteria</taxon>
        <taxon>Enterobacterales</taxon>
        <taxon>Enterobacteriaceae</taxon>
        <taxon>Salmonella</taxon>
    </lineage>
</organism>
<name>RL1_SALEP</name>
<dbReference type="EMBL" id="AM933172">
    <property type="protein sequence ID" value="CAR35505.1"/>
    <property type="molecule type" value="Genomic_DNA"/>
</dbReference>
<dbReference type="RefSeq" id="WP_001096676.1">
    <property type="nucleotide sequence ID" value="NC_011294.1"/>
</dbReference>
<dbReference type="SMR" id="B5QYD5"/>
<dbReference type="KEGG" id="set:SEN3934"/>
<dbReference type="HOGENOM" id="CLU_062853_0_0_6"/>
<dbReference type="Proteomes" id="UP000000613">
    <property type="component" value="Chromosome"/>
</dbReference>
<dbReference type="GO" id="GO:0022625">
    <property type="term" value="C:cytosolic large ribosomal subunit"/>
    <property type="evidence" value="ECO:0007669"/>
    <property type="project" value="TreeGrafter"/>
</dbReference>
<dbReference type="GO" id="GO:0019843">
    <property type="term" value="F:rRNA binding"/>
    <property type="evidence" value="ECO:0007669"/>
    <property type="project" value="UniProtKB-UniRule"/>
</dbReference>
<dbReference type="GO" id="GO:0003735">
    <property type="term" value="F:structural constituent of ribosome"/>
    <property type="evidence" value="ECO:0007669"/>
    <property type="project" value="InterPro"/>
</dbReference>
<dbReference type="GO" id="GO:0000049">
    <property type="term" value="F:tRNA binding"/>
    <property type="evidence" value="ECO:0007669"/>
    <property type="project" value="UniProtKB-KW"/>
</dbReference>
<dbReference type="GO" id="GO:0006417">
    <property type="term" value="P:regulation of translation"/>
    <property type="evidence" value="ECO:0007669"/>
    <property type="project" value="UniProtKB-KW"/>
</dbReference>
<dbReference type="GO" id="GO:0006412">
    <property type="term" value="P:translation"/>
    <property type="evidence" value="ECO:0007669"/>
    <property type="project" value="UniProtKB-UniRule"/>
</dbReference>
<dbReference type="CDD" id="cd00403">
    <property type="entry name" value="Ribosomal_L1"/>
    <property type="match status" value="1"/>
</dbReference>
<dbReference type="FunFam" id="3.40.50.790:FF:000001">
    <property type="entry name" value="50S ribosomal protein L1"/>
    <property type="match status" value="1"/>
</dbReference>
<dbReference type="Gene3D" id="3.30.190.20">
    <property type="match status" value="1"/>
</dbReference>
<dbReference type="Gene3D" id="3.40.50.790">
    <property type="match status" value="1"/>
</dbReference>
<dbReference type="HAMAP" id="MF_01318_B">
    <property type="entry name" value="Ribosomal_uL1_B"/>
    <property type="match status" value="1"/>
</dbReference>
<dbReference type="InterPro" id="IPR005878">
    <property type="entry name" value="Ribosom_uL1_bac-type"/>
</dbReference>
<dbReference type="InterPro" id="IPR002143">
    <property type="entry name" value="Ribosomal_uL1"/>
</dbReference>
<dbReference type="InterPro" id="IPR023674">
    <property type="entry name" value="Ribosomal_uL1-like"/>
</dbReference>
<dbReference type="InterPro" id="IPR028364">
    <property type="entry name" value="Ribosomal_uL1/biogenesis"/>
</dbReference>
<dbReference type="InterPro" id="IPR016095">
    <property type="entry name" value="Ribosomal_uL1_3-a/b-sand"/>
</dbReference>
<dbReference type="InterPro" id="IPR023673">
    <property type="entry name" value="Ribosomal_uL1_CS"/>
</dbReference>
<dbReference type="NCBIfam" id="TIGR01169">
    <property type="entry name" value="rplA_bact"/>
    <property type="match status" value="1"/>
</dbReference>
<dbReference type="PANTHER" id="PTHR36427">
    <property type="entry name" value="54S RIBOSOMAL PROTEIN L1, MITOCHONDRIAL"/>
    <property type="match status" value="1"/>
</dbReference>
<dbReference type="PANTHER" id="PTHR36427:SF3">
    <property type="entry name" value="LARGE RIBOSOMAL SUBUNIT PROTEIN UL1M"/>
    <property type="match status" value="1"/>
</dbReference>
<dbReference type="Pfam" id="PF00687">
    <property type="entry name" value="Ribosomal_L1"/>
    <property type="match status" value="1"/>
</dbReference>
<dbReference type="PIRSF" id="PIRSF002155">
    <property type="entry name" value="Ribosomal_L1"/>
    <property type="match status" value="1"/>
</dbReference>
<dbReference type="SUPFAM" id="SSF56808">
    <property type="entry name" value="Ribosomal protein L1"/>
    <property type="match status" value="1"/>
</dbReference>
<dbReference type="PROSITE" id="PS01199">
    <property type="entry name" value="RIBOSOMAL_L1"/>
    <property type="match status" value="1"/>
</dbReference>
<proteinExistence type="inferred from homology"/>
<accession>B5QYD5</accession>
<keyword id="KW-0678">Repressor</keyword>
<keyword id="KW-0687">Ribonucleoprotein</keyword>
<keyword id="KW-0689">Ribosomal protein</keyword>
<keyword id="KW-0694">RNA-binding</keyword>
<keyword id="KW-0699">rRNA-binding</keyword>
<keyword id="KW-0810">Translation regulation</keyword>
<keyword id="KW-0820">tRNA-binding</keyword>
<protein>
    <recommendedName>
        <fullName evidence="1">Large ribosomal subunit protein uL1</fullName>
    </recommendedName>
    <alternativeName>
        <fullName evidence="2">50S ribosomal protein L1</fullName>
    </alternativeName>
</protein>
<gene>
    <name evidence="1" type="primary">rplA</name>
    <name type="ordered locus">SEN3934</name>
</gene>
<comment type="function">
    <text evidence="1">Binds directly to 23S rRNA. The L1 stalk is quite mobile in the ribosome, and is involved in E site tRNA release.</text>
</comment>
<comment type="function">
    <text evidence="1">Protein L1 is also a translational repressor protein, it controls the translation of the L11 operon by binding to its mRNA.</text>
</comment>
<comment type="subunit">
    <text evidence="1">Part of the 50S ribosomal subunit.</text>
</comment>
<comment type="similarity">
    <text evidence="1">Belongs to the universal ribosomal protein uL1 family.</text>
</comment>
<sequence length="234" mass="24729">MAKLTKRMRVIREKVDATKQYDINEAIALLKELATAKFNESVDVAVNLGIDARKSDQNVRGATVLPHGTGRSVRVAVFTQGPNAEAAKAAGAELVGMEDLADQIKKGEMNFDVVIASPDAMRVVGQLGQVLGPRGLMPNPKVGTVTPNVAEAVKNAKAGQVRYRNDKNGIIHTTIGKVDFDADKLKENLEALLVALKKAKPSQAKGVYIKKVSISTTMGAGVAVDQAGLSASAN</sequence>
<evidence type="ECO:0000255" key="1">
    <source>
        <dbReference type="HAMAP-Rule" id="MF_01318"/>
    </source>
</evidence>
<evidence type="ECO:0000305" key="2"/>
<reference key="1">
    <citation type="journal article" date="2008" name="Genome Res.">
        <title>Comparative genome analysis of Salmonella enteritidis PT4 and Salmonella gallinarum 287/91 provides insights into evolutionary and host adaptation pathways.</title>
        <authorList>
            <person name="Thomson N.R."/>
            <person name="Clayton D.J."/>
            <person name="Windhorst D."/>
            <person name="Vernikos G."/>
            <person name="Davidson S."/>
            <person name="Churcher C."/>
            <person name="Quail M.A."/>
            <person name="Stevens M."/>
            <person name="Jones M.A."/>
            <person name="Watson M."/>
            <person name="Barron A."/>
            <person name="Layton A."/>
            <person name="Pickard D."/>
            <person name="Kingsley R.A."/>
            <person name="Bignell A."/>
            <person name="Clark L."/>
            <person name="Harris B."/>
            <person name="Ormond D."/>
            <person name="Abdellah Z."/>
            <person name="Brooks K."/>
            <person name="Cherevach I."/>
            <person name="Chillingworth T."/>
            <person name="Woodward J."/>
            <person name="Norberczak H."/>
            <person name="Lord A."/>
            <person name="Arrowsmith C."/>
            <person name="Jagels K."/>
            <person name="Moule S."/>
            <person name="Mungall K."/>
            <person name="Saunders M."/>
            <person name="Whitehead S."/>
            <person name="Chabalgoity J.A."/>
            <person name="Maskell D."/>
            <person name="Humphreys T."/>
            <person name="Roberts M."/>
            <person name="Barrow P.A."/>
            <person name="Dougan G."/>
            <person name="Parkhill J."/>
        </authorList>
    </citation>
    <scope>NUCLEOTIDE SEQUENCE [LARGE SCALE GENOMIC DNA]</scope>
    <source>
        <strain>P125109</strain>
    </source>
</reference>
<feature type="chain" id="PRO_1000141454" description="Large ribosomal subunit protein uL1">
    <location>
        <begin position="1"/>
        <end position="234"/>
    </location>
</feature>